<feature type="chain" id="PRO_0000319700" description="Phosphoribosyl-AMP cyclohydrolase">
    <location>
        <begin position="1"/>
        <end position="116"/>
    </location>
</feature>
<feature type="binding site" evidence="1">
    <location>
        <position position="81"/>
    </location>
    <ligand>
        <name>Mg(2+)</name>
        <dbReference type="ChEBI" id="CHEBI:18420"/>
    </ligand>
</feature>
<feature type="binding site" evidence="1">
    <location>
        <position position="82"/>
    </location>
    <ligand>
        <name>Zn(2+)</name>
        <dbReference type="ChEBI" id="CHEBI:29105"/>
        <note>ligand shared between dimeric partners</note>
    </ligand>
</feature>
<feature type="binding site" evidence="1">
    <location>
        <position position="83"/>
    </location>
    <ligand>
        <name>Mg(2+)</name>
        <dbReference type="ChEBI" id="CHEBI:18420"/>
    </ligand>
</feature>
<feature type="binding site" evidence="1">
    <location>
        <position position="85"/>
    </location>
    <ligand>
        <name>Mg(2+)</name>
        <dbReference type="ChEBI" id="CHEBI:18420"/>
    </ligand>
</feature>
<feature type="binding site" evidence="1">
    <location>
        <position position="98"/>
    </location>
    <ligand>
        <name>Zn(2+)</name>
        <dbReference type="ChEBI" id="CHEBI:29105"/>
        <note>ligand shared between dimeric partners</note>
    </ligand>
</feature>
<feature type="binding site" evidence="1">
    <location>
        <position position="105"/>
    </location>
    <ligand>
        <name>Zn(2+)</name>
        <dbReference type="ChEBI" id="CHEBI:29105"/>
        <note>ligand shared between dimeric partners</note>
    </ligand>
</feature>
<proteinExistence type="inferred from homology"/>
<keyword id="KW-0028">Amino-acid biosynthesis</keyword>
<keyword id="KW-0963">Cytoplasm</keyword>
<keyword id="KW-0368">Histidine biosynthesis</keyword>
<keyword id="KW-0378">Hydrolase</keyword>
<keyword id="KW-0460">Magnesium</keyword>
<keyword id="KW-0479">Metal-binding</keyword>
<keyword id="KW-0862">Zinc</keyword>
<protein>
    <recommendedName>
        <fullName evidence="1">Phosphoribosyl-AMP cyclohydrolase</fullName>
        <shortName evidence="1">PRA-CH</shortName>
        <ecNumber evidence="1">3.5.4.19</ecNumber>
    </recommendedName>
</protein>
<sequence>MSALDPAVASRLKRNADGLFTAVVQERATGQVLMVAWMDDDALARTLETREATYFSRSRGEQWVKGLTSGHTQRVHSVRLDCDGDTVLLEVDQVGGACHTGDHTCFDADLLLGPDL</sequence>
<comment type="function">
    <text evidence="1">Catalyzes the hydrolysis of the adenine ring of phosphoribosyl-AMP.</text>
</comment>
<comment type="catalytic activity">
    <reaction evidence="1">
        <text>1-(5-phospho-beta-D-ribosyl)-5'-AMP + H2O = 1-(5-phospho-beta-D-ribosyl)-5-[(5-phospho-beta-D-ribosylamino)methylideneamino]imidazole-4-carboxamide</text>
        <dbReference type="Rhea" id="RHEA:20049"/>
        <dbReference type="ChEBI" id="CHEBI:15377"/>
        <dbReference type="ChEBI" id="CHEBI:58435"/>
        <dbReference type="ChEBI" id="CHEBI:59457"/>
        <dbReference type="EC" id="3.5.4.19"/>
    </reaction>
</comment>
<comment type="cofactor">
    <cofactor evidence="1">
        <name>Mg(2+)</name>
        <dbReference type="ChEBI" id="CHEBI:18420"/>
    </cofactor>
    <text evidence="1">Binds 1 Mg(2+) ion per subunit.</text>
</comment>
<comment type="cofactor">
    <cofactor evidence="1">
        <name>Zn(2+)</name>
        <dbReference type="ChEBI" id="CHEBI:29105"/>
    </cofactor>
    <text evidence="1">Binds 1 zinc ion per subunit.</text>
</comment>
<comment type="pathway">
    <text evidence="1">Amino-acid biosynthesis; L-histidine biosynthesis; L-histidine from 5-phospho-alpha-D-ribose 1-diphosphate: step 3/9.</text>
</comment>
<comment type="subunit">
    <text evidence="1">Homodimer.</text>
</comment>
<comment type="subcellular location">
    <subcellularLocation>
        <location evidence="1">Cytoplasm</location>
    </subcellularLocation>
</comment>
<comment type="similarity">
    <text evidence="1">Belongs to the PRA-CH family.</text>
</comment>
<accession>A1T8W8</accession>
<reference key="1">
    <citation type="submission" date="2006-12" db="EMBL/GenBank/DDBJ databases">
        <title>Complete sequence of Mycobacterium vanbaalenii PYR-1.</title>
        <authorList>
            <consortium name="US DOE Joint Genome Institute"/>
            <person name="Copeland A."/>
            <person name="Lucas S."/>
            <person name="Lapidus A."/>
            <person name="Barry K."/>
            <person name="Detter J.C."/>
            <person name="Glavina del Rio T."/>
            <person name="Hammon N."/>
            <person name="Israni S."/>
            <person name="Dalin E."/>
            <person name="Tice H."/>
            <person name="Pitluck S."/>
            <person name="Singan V."/>
            <person name="Schmutz J."/>
            <person name="Larimer F."/>
            <person name="Land M."/>
            <person name="Hauser L."/>
            <person name="Kyrpides N."/>
            <person name="Anderson I.J."/>
            <person name="Miller C."/>
            <person name="Richardson P."/>
        </authorList>
    </citation>
    <scope>NUCLEOTIDE SEQUENCE [LARGE SCALE GENOMIC DNA]</scope>
    <source>
        <strain>DSM 7251 / JCM 13017 / BCRC 16820 / KCTC 9966 / NRRL B-24157 / PYR-1</strain>
    </source>
</reference>
<name>HIS3_MYCVP</name>
<gene>
    <name evidence="1" type="primary">hisI</name>
    <name type="ordered locus">Mvan_2811</name>
</gene>
<evidence type="ECO:0000255" key="1">
    <source>
        <dbReference type="HAMAP-Rule" id="MF_01021"/>
    </source>
</evidence>
<dbReference type="EC" id="3.5.4.19" evidence="1"/>
<dbReference type="EMBL" id="CP000511">
    <property type="protein sequence ID" value="ABM13618.1"/>
    <property type="molecule type" value="Genomic_DNA"/>
</dbReference>
<dbReference type="RefSeq" id="WP_011780026.1">
    <property type="nucleotide sequence ID" value="NZ_JACKSD010000326.1"/>
</dbReference>
<dbReference type="SMR" id="A1T8W8"/>
<dbReference type="STRING" id="350058.Mvan_2811"/>
<dbReference type="KEGG" id="mva:Mvan_2811"/>
<dbReference type="eggNOG" id="COG0139">
    <property type="taxonomic scope" value="Bacteria"/>
</dbReference>
<dbReference type="HOGENOM" id="CLU_048577_5_1_11"/>
<dbReference type="UniPathway" id="UPA00031">
    <property type="reaction ID" value="UER00008"/>
</dbReference>
<dbReference type="Proteomes" id="UP000009159">
    <property type="component" value="Chromosome"/>
</dbReference>
<dbReference type="GO" id="GO:0005737">
    <property type="term" value="C:cytoplasm"/>
    <property type="evidence" value="ECO:0007669"/>
    <property type="project" value="UniProtKB-SubCell"/>
</dbReference>
<dbReference type="GO" id="GO:0000287">
    <property type="term" value="F:magnesium ion binding"/>
    <property type="evidence" value="ECO:0007669"/>
    <property type="project" value="UniProtKB-UniRule"/>
</dbReference>
<dbReference type="GO" id="GO:0004635">
    <property type="term" value="F:phosphoribosyl-AMP cyclohydrolase activity"/>
    <property type="evidence" value="ECO:0007669"/>
    <property type="project" value="UniProtKB-UniRule"/>
</dbReference>
<dbReference type="GO" id="GO:0008270">
    <property type="term" value="F:zinc ion binding"/>
    <property type="evidence" value="ECO:0007669"/>
    <property type="project" value="UniProtKB-UniRule"/>
</dbReference>
<dbReference type="GO" id="GO:0000105">
    <property type="term" value="P:L-histidine biosynthetic process"/>
    <property type="evidence" value="ECO:0007669"/>
    <property type="project" value="UniProtKB-UniRule"/>
</dbReference>
<dbReference type="FunFam" id="3.10.20.810:FF:000001">
    <property type="entry name" value="Histidine biosynthesis bifunctional protein HisIE"/>
    <property type="match status" value="1"/>
</dbReference>
<dbReference type="Gene3D" id="3.10.20.810">
    <property type="entry name" value="Phosphoribosyl-AMP cyclohydrolase"/>
    <property type="match status" value="1"/>
</dbReference>
<dbReference type="HAMAP" id="MF_01021">
    <property type="entry name" value="HisI"/>
    <property type="match status" value="1"/>
</dbReference>
<dbReference type="InterPro" id="IPR026660">
    <property type="entry name" value="PRA-CH"/>
</dbReference>
<dbReference type="InterPro" id="IPR002496">
    <property type="entry name" value="PRib_AMP_CycHydrolase_dom"/>
</dbReference>
<dbReference type="InterPro" id="IPR038019">
    <property type="entry name" value="PRib_AMP_CycHydrolase_sf"/>
</dbReference>
<dbReference type="NCBIfam" id="NF000768">
    <property type="entry name" value="PRK00051.1"/>
    <property type="match status" value="1"/>
</dbReference>
<dbReference type="PANTHER" id="PTHR42945">
    <property type="entry name" value="HISTIDINE BIOSYNTHESIS BIFUNCTIONAL PROTEIN"/>
    <property type="match status" value="1"/>
</dbReference>
<dbReference type="PANTHER" id="PTHR42945:SF11">
    <property type="entry name" value="PHOSPHORIBOSYL-AMP CYCLOHYDROLASE"/>
    <property type="match status" value="1"/>
</dbReference>
<dbReference type="Pfam" id="PF01502">
    <property type="entry name" value="PRA-CH"/>
    <property type="match status" value="1"/>
</dbReference>
<dbReference type="SUPFAM" id="SSF141734">
    <property type="entry name" value="HisI-like"/>
    <property type="match status" value="1"/>
</dbReference>
<organism>
    <name type="scientific">Mycolicibacterium vanbaalenii (strain DSM 7251 / JCM 13017 / BCRC 16820 / KCTC 9966 / NRRL B-24157 / PYR-1)</name>
    <name type="common">Mycobacterium vanbaalenii</name>
    <dbReference type="NCBI Taxonomy" id="350058"/>
    <lineage>
        <taxon>Bacteria</taxon>
        <taxon>Bacillati</taxon>
        <taxon>Actinomycetota</taxon>
        <taxon>Actinomycetes</taxon>
        <taxon>Mycobacteriales</taxon>
        <taxon>Mycobacteriaceae</taxon>
        <taxon>Mycolicibacterium</taxon>
    </lineage>
</organism>